<evidence type="ECO:0000255" key="1">
    <source>
        <dbReference type="HAMAP-Rule" id="MF_00072"/>
    </source>
</evidence>
<sequence>MTLSPYLQEVAKRRTFAIISHPDAGKTTITEKVLLFGQAIQTAGTVKGRGSNQHAKSDWMEMEKQRGISITTSVMQFPYHDCLVNLLDTPGHEDFSEDTYRTLTAVDCCLMVIDAAKGVEDRTRKLMEVTRLRDTPILTFMNKLDRDIRDPMELLDEVENELKIGCAPITWPIGCGKLFKGVYHLYKDETYLYQSGKGHTIQEVRIVKGLNNPDLDAAVGEDLAQQLRDELELVKGASNEFDKELFLAGEITPVFFGTALGNFGVDHMLDGLVEWAPAPMPRQTDTRTVEASEDKFTGFVFKIQANMDPKHRDRVAFMRVVSGKYEKGMKLRQVRTAKDVVISDALTFMAGDRSHVEEAYPGDILGLHNHGTIQIGDTFTQGEMMKFTGIPNFAPELFRRIRLKDPLKQKQLLKGLVQLSEEGAVQVFRPISNNDLIVGAVGVLQFDVVVARLKSEYNVEAVYESVNVATARWVECADAKKFEEFKRKNESQLALDGGDNLAYIATSMVNLRLAQERYPDVQFHQTREH</sequence>
<protein>
    <recommendedName>
        <fullName evidence="1">Peptide chain release factor 3</fullName>
        <shortName evidence="1">RF-3</shortName>
    </recommendedName>
</protein>
<accession>B1LEH8</accession>
<name>RF3_ECOSM</name>
<organism>
    <name type="scientific">Escherichia coli (strain SMS-3-5 / SECEC)</name>
    <dbReference type="NCBI Taxonomy" id="439855"/>
    <lineage>
        <taxon>Bacteria</taxon>
        <taxon>Pseudomonadati</taxon>
        <taxon>Pseudomonadota</taxon>
        <taxon>Gammaproteobacteria</taxon>
        <taxon>Enterobacterales</taxon>
        <taxon>Enterobacteriaceae</taxon>
        <taxon>Escherichia</taxon>
    </lineage>
</organism>
<feature type="chain" id="PRO_1000193522" description="Peptide chain release factor 3">
    <location>
        <begin position="1"/>
        <end position="529"/>
    </location>
</feature>
<feature type="domain" description="tr-type G">
    <location>
        <begin position="11"/>
        <end position="280"/>
    </location>
</feature>
<feature type="binding site" evidence="1">
    <location>
        <begin position="20"/>
        <end position="27"/>
    </location>
    <ligand>
        <name>GTP</name>
        <dbReference type="ChEBI" id="CHEBI:37565"/>
    </ligand>
</feature>
<feature type="binding site" evidence="1">
    <location>
        <begin position="88"/>
        <end position="92"/>
    </location>
    <ligand>
        <name>GTP</name>
        <dbReference type="ChEBI" id="CHEBI:37565"/>
    </ligand>
</feature>
<feature type="binding site" evidence="1">
    <location>
        <begin position="142"/>
        <end position="145"/>
    </location>
    <ligand>
        <name>GTP</name>
        <dbReference type="ChEBI" id="CHEBI:37565"/>
    </ligand>
</feature>
<reference key="1">
    <citation type="journal article" date="2008" name="J. Bacteriol.">
        <title>Insights into the environmental resistance gene pool from the genome sequence of the multidrug-resistant environmental isolate Escherichia coli SMS-3-5.</title>
        <authorList>
            <person name="Fricke W.F."/>
            <person name="Wright M.S."/>
            <person name="Lindell A.H."/>
            <person name="Harkins D.M."/>
            <person name="Baker-Austin C."/>
            <person name="Ravel J."/>
            <person name="Stepanauskas R."/>
        </authorList>
    </citation>
    <scope>NUCLEOTIDE SEQUENCE [LARGE SCALE GENOMIC DNA]</scope>
    <source>
        <strain>SMS-3-5 / SECEC</strain>
    </source>
</reference>
<proteinExistence type="inferred from homology"/>
<gene>
    <name evidence="1" type="primary">prfC</name>
    <name type="ordered locus">EcSMS35_4922</name>
</gene>
<dbReference type="EMBL" id="CP000970">
    <property type="protein sequence ID" value="ACB19617.1"/>
    <property type="molecule type" value="Genomic_DNA"/>
</dbReference>
<dbReference type="RefSeq" id="WP_000175940.1">
    <property type="nucleotide sequence ID" value="NC_010498.1"/>
</dbReference>
<dbReference type="SMR" id="B1LEH8"/>
<dbReference type="KEGG" id="ecm:EcSMS35_4922"/>
<dbReference type="HOGENOM" id="CLU_002794_2_1_6"/>
<dbReference type="Proteomes" id="UP000007011">
    <property type="component" value="Chromosome"/>
</dbReference>
<dbReference type="GO" id="GO:0005829">
    <property type="term" value="C:cytosol"/>
    <property type="evidence" value="ECO:0007669"/>
    <property type="project" value="TreeGrafter"/>
</dbReference>
<dbReference type="GO" id="GO:0005525">
    <property type="term" value="F:GTP binding"/>
    <property type="evidence" value="ECO:0007669"/>
    <property type="project" value="UniProtKB-UniRule"/>
</dbReference>
<dbReference type="GO" id="GO:0003924">
    <property type="term" value="F:GTPase activity"/>
    <property type="evidence" value="ECO:0007669"/>
    <property type="project" value="InterPro"/>
</dbReference>
<dbReference type="GO" id="GO:0097216">
    <property type="term" value="F:guanosine tetraphosphate binding"/>
    <property type="evidence" value="ECO:0007669"/>
    <property type="project" value="UniProtKB-ARBA"/>
</dbReference>
<dbReference type="GO" id="GO:0016150">
    <property type="term" value="F:translation release factor activity, codon nonspecific"/>
    <property type="evidence" value="ECO:0007669"/>
    <property type="project" value="TreeGrafter"/>
</dbReference>
<dbReference type="GO" id="GO:0016149">
    <property type="term" value="F:translation release factor activity, codon specific"/>
    <property type="evidence" value="ECO:0007669"/>
    <property type="project" value="UniProtKB-UniRule"/>
</dbReference>
<dbReference type="GO" id="GO:0006449">
    <property type="term" value="P:regulation of translational termination"/>
    <property type="evidence" value="ECO:0007669"/>
    <property type="project" value="UniProtKB-UniRule"/>
</dbReference>
<dbReference type="CDD" id="cd04169">
    <property type="entry name" value="RF3"/>
    <property type="match status" value="1"/>
</dbReference>
<dbReference type="CDD" id="cd03689">
    <property type="entry name" value="RF3_II"/>
    <property type="match status" value="1"/>
</dbReference>
<dbReference type="CDD" id="cd16259">
    <property type="entry name" value="RF3_III"/>
    <property type="match status" value="1"/>
</dbReference>
<dbReference type="FunFam" id="2.40.30.10:FF:000040">
    <property type="entry name" value="Peptide chain release factor 3"/>
    <property type="match status" value="1"/>
</dbReference>
<dbReference type="FunFam" id="3.30.70.3280:FF:000001">
    <property type="entry name" value="Peptide chain release factor 3"/>
    <property type="match status" value="1"/>
</dbReference>
<dbReference type="FunFam" id="3.40.50.300:FF:000184">
    <property type="entry name" value="Peptide chain release factor 3"/>
    <property type="match status" value="1"/>
</dbReference>
<dbReference type="FunFam" id="3.40.50.300:FF:000253">
    <property type="entry name" value="Peptide chain release factor 3"/>
    <property type="match status" value="1"/>
</dbReference>
<dbReference type="Gene3D" id="3.40.50.300">
    <property type="entry name" value="P-loop containing nucleotide triphosphate hydrolases"/>
    <property type="match status" value="3"/>
</dbReference>
<dbReference type="Gene3D" id="3.30.70.3280">
    <property type="entry name" value="Peptide chain release factor 3, domain III"/>
    <property type="match status" value="1"/>
</dbReference>
<dbReference type="HAMAP" id="MF_00072">
    <property type="entry name" value="Rel_fac_3"/>
    <property type="match status" value="1"/>
</dbReference>
<dbReference type="InterPro" id="IPR053905">
    <property type="entry name" value="EF-G-like_DII"/>
</dbReference>
<dbReference type="InterPro" id="IPR035647">
    <property type="entry name" value="EFG_III/V"/>
</dbReference>
<dbReference type="InterPro" id="IPR031157">
    <property type="entry name" value="G_TR_CS"/>
</dbReference>
<dbReference type="InterPro" id="IPR027417">
    <property type="entry name" value="P-loop_NTPase"/>
</dbReference>
<dbReference type="InterPro" id="IPR004548">
    <property type="entry name" value="PrfC"/>
</dbReference>
<dbReference type="InterPro" id="IPR032090">
    <property type="entry name" value="RF3_C"/>
</dbReference>
<dbReference type="InterPro" id="IPR038467">
    <property type="entry name" value="RF3_dom_3_sf"/>
</dbReference>
<dbReference type="InterPro" id="IPR041732">
    <property type="entry name" value="RF3_GTP-bd"/>
</dbReference>
<dbReference type="InterPro" id="IPR005225">
    <property type="entry name" value="Small_GTP-bd"/>
</dbReference>
<dbReference type="InterPro" id="IPR000795">
    <property type="entry name" value="T_Tr_GTP-bd_dom"/>
</dbReference>
<dbReference type="InterPro" id="IPR009000">
    <property type="entry name" value="Transl_B-barrel_sf"/>
</dbReference>
<dbReference type="NCBIfam" id="TIGR00503">
    <property type="entry name" value="prfC"/>
    <property type="match status" value="1"/>
</dbReference>
<dbReference type="NCBIfam" id="NF001964">
    <property type="entry name" value="PRK00741.1"/>
    <property type="match status" value="1"/>
</dbReference>
<dbReference type="NCBIfam" id="TIGR00231">
    <property type="entry name" value="small_GTP"/>
    <property type="match status" value="1"/>
</dbReference>
<dbReference type="PANTHER" id="PTHR43556">
    <property type="entry name" value="PEPTIDE CHAIN RELEASE FACTOR RF3"/>
    <property type="match status" value="1"/>
</dbReference>
<dbReference type="PANTHER" id="PTHR43556:SF2">
    <property type="entry name" value="PEPTIDE CHAIN RELEASE FACTOR RF3"/>
    <property type="match status" value="1"/>
</dbReference>
<dbReference type="Pfam" id="PF22042">
    <property type="entry name" value="EF-G_D2"/>
    <property type="match status" value="1"/>
</dbReference>
<dbReference type="Pfam" id="PF00009">
    <property type="entry name" value="GTP_EFTU"/>
    <property type="match status" value="1"/>
</dbReference>
<dbReference type="Pfam" id="PF16658">
    <property type="entry name" value="RF3_C"/>
    <property type="match status" value="1"/>
</dbReference>
<dbReference type="PRINTS" id="PR00315">
    <property type="entry name" value="ELONGATNFCT"/>
</dbReference>
<dbReference type="SUPFAM" id="SSF54980">
    <property type="entry name" value="EF-G C-terminal domain-like"/>
    <property type="match status" value="1"/>
</dbReference>
<dbReference type="SUPFAM" id="SSF52540">
    <property type="entry name" value="P-loop containing nucleoside triphosphate hydrolases"/>
    <property type="match status" value="1"/>
</dbReference>
<dbReference type="SUPFAM" id="SSF50447">
    <property type="entry name" value="Translation proteins"/>
    <property type="match status" value="1"/>
</dbReference>
<dbReference type="PROSITE" id="PS00301">
    <property type="entry name" value="G_TR_1"/>
    <property type="match status" value="1"/>
</dbReference>
<dbReference type="PROSITE" id="PS51722">
    <property type="entry name" value="G_TR_2"/>
    <property type="match status" value="1"/>
</dbReference>
<keyword id="KW-0963">Cytoplasm</keyword>
<keyword id="KW-0342">GTP-binding</keyword>
<keyword id="KW-0547">Nucleotide-binding</keyword>
<keyword id="KW-0648">Protein biosynthesis</keyword>
<comment type="function">
    <text evidence="1">Increases the formation of ribosomal termination complexes and stimulates activities of RF-1 and RF-2. It binds guanine nucleotides and has strong preference for UGA stop codons. It may interact directly with the ribosome. The stimulation of RF-1 and RF-2 is significantly reduced by GTP and GDP, but not by GMP.</text>
</comment>
<comment type="subcellular location">
    <subcellularLocation>
        <location evidence="1">Cytoplasm</location>
    </subcellularLocation>
</comment>
<comment type="similarity">
    <text evidence="1">Belongs to the TRAFAC class translation factor GTPase superfamily. Classic translation factor GTPase family. PrfC subfamily.</text>
</comment>